<sequence length="172" mass="19817">MNYFNVGKIVNTQGLQGEMRVLSVTDFAEERFKKGAELALFDEKDQFVQTVTIASHRKQKNFDIIKFKDMYHINTIEKYKGYSLKVAEEDLNDLDDGEFYYHEIIGLEVYEGDSLVGTIKEILQPGANDVWVVKRKGKRDLLLPYIPPVVLNVDIPNKRVDVEILEGLDDED</sequence>
<protein>
    <recommendedName>
        <fullName evidence="1">Ribosome maturation factor RimM</fullName>
    </recommendedName>
</protein>
<keyword id="KW-0143">Chaperone</keyword>
<keyword id="KW-0963">Cytoplasm</keyword>
<keyword id="KW-0690">Ribosome biogenesis</keyword>
<keyword id="KW-0698">rRNA processing</keyword>
<reference key="1">
    <citation type="journal article" date="2010" name="Genome Biol.">
        <title>Structure and dynamics of the pan-genome of Streptococcus pneumoniae and closely related species.</title>
        <authorList>
            <person name="Donati C."/>
            <person name="Hiller N.L."/>
            <person name="Tettelin H."/>
            <person name="Muzzi A."/>
            <person name="Croucher N.J."/>
            <person name="Angiuoli S.V."/>
            <person name="Oggioni M."/>
            <person name="Dunning Hotopp J.C."/>
            <person name="Hu F.Z."/>
            <person name="Riley D.R."/>
            <person name="Covacci A."/>
            <person name="Mitchell T.J."/>
            <person name="Bentley S.D."/>
            <person name="Kilian M."/>
            <person name="Ehrlich G.D."/>
            <person name="Rappuoli R."/>
            <person name="Moxon E.R."/>
            <person name="Masignani V."/>
        </authorList>
    </citation>
    <scope>NUCLEOTIDE SEQUENCE [LARGE SCALE GENOMIC DNA]</scope>
    <source>
        <strain>Hungary19A-6</strain>
    </source>
</reference>
<feature type="chain" id="PRO_1000089526" description="Ribosome maturation factor RimM">
    <location>
        <begin position="1"/>
        <end position="172"/>
    </location>
</feature>
<feature type="domain" description="PRC barrel" evidence="1">
    <location>
        <begin position="95"/>
        <end position="168"/>
    </location>
</feature>
<gene>
    <name evidence="1" type="primary">rimM</name>
    <name type="ordered locus">SPH_0876</name>
</gene>
<proteinExistence type="inferred from homology"/>
<organism>
    <name type="scientific">Streptococcus pneumoniae (strain Hungary19A-6)</name>
    <dbReference type="NCBI Taxonomy" id="487214"/>
    <lineage>
        <taxon>Bacteria</taxon>
        <taxon>Bacillati</taxon>
        <taxon>Bacillota</taxon>
        <taxon>Bacilli</taxon>
        <taxon>Lactobacillales</taxon>
        <taxon>Streptococcaceae</taxon>
        <taxon>Streptococcus</taxon>
    </lineage>
</organism>
<name>RIMM_STRPI</name>
<evidence type="ECO:0000255" key="1">
    <source>
        <dbReference type="HAMAP-Rule" id="MF_00014"/>
    </source>
</evidence>
<comment type="function">
    <text evidence="1">An accessory protein needed during the final step in the assembly of 30S ribosomal subunit, possibly for assembly of the head region. Essential for efficient processing of 16S rRNA. May be needed both before and after RbfA during the maturation of 16S rRNA. It has affinity for free ribosomal 30S subunits but not for 70S ribosomes.</text>
</comment>
<comment type="subunit">
    <text evidence="1">Binds ribosomal protein uS19.</text>
</comment>
<comment type="subcellular location">
    <subcellularLocation>
        <location evidence="1">Cytoplasm</location>
    </subcellularLocation>
</comment>
<comment type="domain">
    <text evidence="1">The PRC barrel domain binds ribosomal protein uS19.</text>
</comment>
<comment type="similarity">
    <text evidence="1">Belongs to the RimM family.</text>
</comment>
<accession>B1IAV2</accession>
<dbReference type="EMBL" id="CP000936">
    <property type="protein sequence ID" value="ACA37439.1"/>
    <property type="molecule type" value="Genomic_DNA"/>
</dbReference>
<dbReference type="RefSeq" id="WP_001105899.1">
    <property type="nucleotide sequence ID" value="NC_010380.1"/>
</dbReference>
<dbReference type="SMR" id="B1IAV2"/>
<dbReference type="GeneID" id="45653851"/>
<dbReference type="KEGG" id="spv:SPH_0876"/>
<dbReference type="HOGENOM" id="CLU_077636_3_1_9"/>
<dbReference type="Proteomes" id="UP000002163">
    <property type="component" value="Chromosome"/>
</dbReference>
<dbReference type="GO" id="GO:0005737">
    <property type="term" value="C:cytoplasm"/>
    <property type="evidence" value="ECO:0007669"/>
    <property type="project" value="UniProtKB-SubCell"/>
</dbReference>
<dbReference type="GO" id="GO:0005840">
    <property type="term" value="C:ribosome"/>
    <property type="evidence" value="ECO:0007669"/>
    <property type="project" value="InterPro"/>
</dbReference>
<dbReference type="GO" id="GO:0043022">
    <property type="term" value="F:ribosome binding"/>
    <property type="evidence" value="ECO:0007669"/>
    <property type="project" value="InterPro"/>
</dbReference>
<dbReference type="GO" id="GO:0042274">
    <property type="term" value="P:ribosomal small subunit biogenesis"/>
    <property type="evidence" value="ECO:0007669"/>
    <property type="project" value="UniProtKB-UniRule"/>
</dbReference>
<dbReference type="GO" id="GO:0006364">
    <property type="term" value="P:rRNA processing"/>
    <property type="evidence" value="ECO:0007669"/>
    <property type="project" value="UniProtKB-UniRule"/>
</dbReference>
<dbReference type="Gene3D" id="2.30.30.240">
    <property type="entry name" value="PRC-barrel domain"/>
    <property type="match status" value="1"/>
</dbReference>
<dbReference type="Gene3D" id="2.40.30.60">
    <property type="entry name" value="RimM"/>
    <property type="match status" value="1"/>
</dbReference>
<dbReference type="HAMAP" id="MF_00014">
    <property type="entry name" value="Ribosome_mat_RimM"/>
    <property type="match status" value="1"/>
</dbReference>
<dbReference type="InterPro" id="IPR027275">
    <property type="entry name" value="PRC-brl_dom"/>
</dbReference>
<dbReference type="InterPro" id="IPR011033">
    <property type="entry name" value="PRC_barrel-like_sf"/>
</dbReference>
<dbReference type="InterPro" id="IPR011961">
    <property type="entry name" value="RimM"/>
</dbReference>
<dbReference type="InterPro" id="IPR002676">
    <property type="entry name" value="RimM_N"/>
</dbReference>
<dbReference type="InterPro" id="IPR036976">
    <property type="entry name" value="RimM_N_sf"/>
</dbReference>
<dbReference type="InterPro" id="IPR009000">
    <property type="entry name" value="Transl_B-barrel_sf"/>
</dbReference>
<dbReference type="NCBIfam" id="TIGR02273">
    <property type="entry name" value="16S_RimM"/>
    <property type="match status" value="1"/>
</dbReference>
<dbReference type="PANTHER" id="PTHR33692">
    <property type="entry name" value="RIBOSOME MATURATION FACTOR RIMM"/>
    <property type="match status" value="1"/>
</dbReference>
<dbReference type="PANTHER" id="PTHR33692:SF1">
    <property type="entry name" value="RIBOSOME MATURATION FACTOR RIMM"/>
    <property type="match status" value="1"/>
</dbReference>
<dbReference type="Pfam" id="PF05239">
    <property type="entry name" value="PRC"/>
    <property type="match status" value="1"/>
</dbReference>
<dbReference type="Pfam" id="PF01782">
    <property type="entry name" value="RimM"/>
    <property type="match status" value="1"/>
</dbReference>
<dbReference type="SUPFAM" id="SSF50346">
    <property type="entry name" value="PRC-barrel domain"/>
    <property type="match status" value="1"/>
</dbReference>
<dbReference type="SUPFAM" id="SSF50447">
    <property type="entry name" value="Translation proteins"/>
    <property type="match status" value="1"/>
</dbReference>